<dbReference type="EMBL" id="AF077336">
    <property type="protein sequence ID" value="AAD46090.1"/>
    <property type="molecule type" value="Genomic_DNA"/>
</dbReference>
<dbReference type="SMR" id="Q9QSR1"/>
<dbReference type="Proteomes" id="UP000007418">
    <property type="component" value="Segment"/>
</dbReference>
<dbReference type="GO" id="GO:0043657">
    <property type="term" value="C:host cell"/>
    <property type="evidence" value="ECO:0007669"/>
    <property type="project" value="GOC"/>
</dbReference>
<dbReference type="GO" id="GO:0042025">
    <property type="term" value="C:host cell nucleus"/>
    <property type="evidence" value="ECO:0007669"/>
    <property type="project" value="UniProtKB-SubCell"/>
</dbReference>
<dbReference type="GO" id="GO:0043655">
    <property type="term" value="C:host extracellular space"/>
    <property type="evidence" value="ECO:0007669"/>
    <property type="project" value="UniProtKB-SubCell"/>
</dbReference>
<dbReference type="GO" id="GO:0044423">
    <property type="term" value="C:virion component"/>
    <property type="evidence" value="ECO:0007669"/>
    <property type="project" value="UniProtKB-UniRule"/>
</dbReference>
<dbReference type="GO" id="GO:0006351">
    <property type="term" value="P:DNA-templated transcription"/>
    <property type="evidence" value="ECO:0007669"/>
    <property type="project" value="UniProtKB-UniRule"/>
</dbReference>
<dbReference type="GO" id="GO:0034220">
    <property type="term" value="P:monoatomic ion transmembrane transport"/>
    <property type="evidence" value="ECO:0007669"/>
    <property type="project" value="UniProtKB-KW"/>
</dbReference>
<dbReference type="GO" id="GO:0051260">
    <property type="term" value="P:protein homooligomerization"/>
    <property type="evidence" value="ECO:0007669"/>
    <property type="project" value="UniProtKB-UniRule"/>
</dbReference>
<dbReference type="GO" id="GO:0006355">
    <property type="term" value="P:regulation of DNA-templated transcription"/>
    <property type="evidence" value="ECO:0007669"/>
    <property type="project" value="UniProtKB-UniRule"/>
</dbReference>
<dbReference type="GO" id="GO:0046718">
    <property type="term" value="P:symbiont entry into host cell"/>
    <property type="evidence" value="ECO:0007669"/>
    <property type="project" value="UniProtKB-KW"/>
</dbReference>
<dbReference type="GO" id="GO:0052151">
    <property type="term" value="P:symbiont-mediated activation of host apoptosis"/>
    <property type="evidence" value="ECO:0007669"/>
    <property type="project" value="UniProtKB-UniRule"/>
</dbReference>
<dbReference type="GO" id="GO:0039592">
    <property type="term" value="P:symbiont-mediated arrest of host cell cycle during G2/M transition"/>
    <property type="evidence" value="ECO:0007669"/>
    <property type="project" value="UniProtKB-UniRule"/>
</dbReference>
<dbReference type="GO" id="GO:0075732">
    <property type="term" value="P:viral penetration into host nucleus"/>
    <property type="evidence" value="ECO:0007669"/>
    <property type="project" value="UniProtKB-UniRule"/>
</dbReference>
<dbReference type="FunFam" id="1.20.5.90:FF:000001">
    <property type="entry name" value="Protein Vpr"/>
    <property type="match status" value="1"/>
</dbReference>
<dbReference type="Gene3D" id="6.10.210.10">
    <property type="match status" value="1"/>
</dbReference>
<dbReference type="Gene3D" id="1.20.5.90">
    <property type="entry name" value="VpR/VpX protein, C-terminal domain"/>
    <property type="match status" value="1"/>
</dbReference>
<dbReference type="HAMAP" id="MF_04080">
    <property type="entry name" value="HIV_VPR"/>
    <property type="match status" value="1"/>
</dbReference>
<dbReference type="InterPro" id="IPR000012">
    <property type="entry name" value="RetroV_VpR/X"/>
</dbReference>
<dbReference type="Pfam" id="PF00522">
    <property type="entry name" value="VPR"/>
    <property type="match status" value="1"/>
</dbReference>
<dbReference type="PRINTS" id="PR00444">
    <property type="entry name" value="HIVVPRVPX"/>
</dbReference>
<comment type="function">
    <text evidence="1">During virus replication, may deplete host UNG protein, and incude G2-M cell cycle arrest. Acts by targeting specific host proteins for degradation by the 26S proteasome, through association with the cellular CUL4A-DDB1 E3 ligase complex by direct interaction with host VPRPB/DCAF-1. Cell cycle arrest reportedly occurs within hours of infection and is not blocked by antiviral agents, suggesting that it is initiated by the VPR carried into the virion. Additionally, VPR induces apoptosis in a cell cycle dependent manner suggesting that these two effects are mechanistically linked. Detected in the serum and cerebrospinal fluid of AIDS patient, VPR may also induce cell death to bystander cells.</text>
</comment>
<comment type="function">
    <text evidence="1">During virus entry, plays a role in the transport of the viral pre-integration (PIC) complex to the host nucleus. This function is crucial for viral infection of non-dividing macrophages. May act directly at the nuclear pore complex, by binding nucleoporins phenylalanine-glycine (FG)-repeat regions.</text>
</comment>
<comment type="subunit">
    <text evidence="1">Homooligomer, may form homodimer. Interacts with p6-gag region of the Pr55 Gag precursor protein through a (Leu-X-X)4 motif near the C-terminus of the P6gag protein. Interacts with host UNG. May interact with host RAD23A/HHR23A. Interacts with host VPRBP/DCAF1, leading to hijack the CUL4A-RBX1-DDB1-DCAF1/VPRBP complex, mediating ubiquitination of host proteins such as TERT and ZGPAT and arrest of the cell cycle in G2 phase.</text>
</comment>
<comment type="subcellular location">
    <subcellularLocation>
        <location evidence="1">Virion</location>
    </subcellularLocation>
    <subcellularLocation>
        <location evidence="1">Host nucleus</location>
    </subcellularLocation>
    <subcellularLocation>
        <location evidence="1">Host extracellular space</location>
    </subcellularLocation>
    <text evidence="1">Incorporation into virion is dependent on p6 GAG sequences. Lacks a canonical nuclear localization signal, thus import into nucleus may function independently of the human importin pathway. Detected in high quantity in the serum and cerebrospinal fluid of AIDS patient.</text>
</comment>
<comment type="PTM">
    <text evidence="1">Phosphorylated on several residues by host. These phosphorylations regulate VPR activity for the nuclear import of the HIV-1 pre-integration complex.</text>
</comment>
<comment type="miscellaneous">
    <text evidence="1">HIV-1 lineages are divided in three main groups, M (for Major), O (for Outlier), and N (for New, or Non-M, Non-O). The vast majority of strains found worldwide belong to the group M. Group O seems to be endemic to and largely confined to Cameroon and neighboring countries in West Central Africa, where these viruses represent a small minority of HIV-1 strains. The group N is represented by a limited number of isolates from Cameroonian persons. The group M is further subdivided in 9 clades or subtypes (A to D, F to H, J and K).</text>
</comment>
<comment type="similarity">
    <text evidence="1">Belongs to the HIV-1 VPR protein family.</text>
</comment>
<gene>
    <name evidence="1" type="primary">vpr</name>
</gene>
<organism>
    <name type="scientific">Human immunodeficiency virus type 1 group M subtype F1 (isolate VI850)</name>
    <name type="common">HIV-1</name>
    <dbReference type="NCBI Taxonomy" id="388813"/>
    <lineage>
        <taxon>Viruses</taxon>
        <taxon>Riboviria</taxon>
        <taxon>Pararnavirae</taxon>
        <taxon>Artverviricota</taxon>
        <taxon>Revtraviricetes</taxon>
        <taxon>Ortervirales</taxon>
        <taxon>Retroviridae</taxon>
        <taxon>Orthoretrovirinae</taxon>
        <taxon>Lentivirus</taxon>
        <taxon>Human immunodeficiency virus type 1</taxon>
    </lineage>
</organism>
<feature type="chain" id="PRO_0000246765" description="Protein Vpr">
    <location>
        <begin position="1"/>
        <end position="96"/>
    </location>
</feature>
<feature type="region of interest" description="Homooligomerization" evidence="1">
    <location>
        <begin position="1"/>
        <end position="42"/>
    </location>
</feature>
<feature type="modified residue" description="Phosphoserine; by host" evidence="1">
    <location>
        <position position="79"/>
    </location>
</feature>
<feature type="modified residue" description="Phosphoserine; by host" evidence="1">
    <location>
        <position position="94"/>
    </location>
</feature>
<feature type="modified residue" description="Phosphoserine; by host" evidence="1">
    <location>
        <position position="96"/>
    </location>
</feature>
<accession>Q9QSR1</accession>
<keyword id="KW-0010">Activator</keyword>
<keyword id="KW-0014">AIDS</keyword>
<keyword id="KW-0053">Apoptosis</keyword>
<keyword id="KW-0131">Cell cycle</keyword>
<keyword id="KW-1079">Host G2/M cell cycle arrest by virus</keyword>
<keyword id="KW-1048">Host nucleus</keyword>
<keyword id="KW-0945">Host-virus interaction</keyword>
<keyword id="KW-0407">Ion channel</keyword>
<keyword id="KW-0406">Ion transport</keyword>
<keyword id="KW-1121">Modulation of host cell cycle by virus</keyword>
<keyword id="KW-0597">Phosphoprotein</keyword>
<keyword id="KW-1185">Reference proteome</keyword>
<keyword id="KW-0804">Transcription</keyword>
<keyword id="KW-0805">Transcription regulation</keyword>
<keyword id="KW-0813">Transport</keyword>
<keyword id="KW-1163">Viral penetration into host nucleus</keyword>
<keyword id="KW-0946">Virion</keyword>
<keyword id="KW-1160">Virus entry into host cell</keyword>
<evidence type="ECO:0000255" key="1">
    <source>
        <dbReference type="HAMAP-Rule" id="MF_04080"/>
    </source>
</evidence>
<reference key="1">
    <citation type="journal article" date="2000" name="Virology">
        <title>Virtually full-length subtype F and F/D recombinant HIV-1 from Africa and South America.</title>
        <authorList>
            <person name="Laukkanen T."/>
            <person name="Carr J.K."/>
            <person name="Janssens W."/>
            <person name="Liitsola K."/>
            <person name="Gotte D."/>
            <person name="McCutchan F.E."/>
            <person name="Op de Coul E."/>
            <person name="Cornelissen M."/>
            <person name="Heyndrickx L."/>
            <person name="van der Groen G."/>
            <person name="Salminen M.O."/>
        </authorList>
    </citation>
    <scope>NUCLEOTIDE SEQUENCE [GENOMIC DNA]</scope>
</reference>
<sequence length="96" mass="11255">MEQAPGDQGPQREPYNEWALEILEELKNEAVRHFPRPWLHGLGQHIYNTYGDTWEGVEAIIRILQQLLFIHFRIGCRHSRIGIVPQRRVRNGASRS</sequence>
<name>VPR_HV1VI</name>
<protein>
    <recommendedName>
        <fullName evidence="1">Protein Vpr</fullName>
    </recommendedName>
    <alternativeName>
        <fullName evidence="1">R ORF protein</fullName>
    </alternativeName>
    <alternativeName>
        <fullName evidence="1">Viral protein R</fullName>
    </alternativeName>
</protein>
<organismHost>
    <name type="scientific">Homo sapiens</name>
    <name type="common">Human</name>
    <dbReference type="NCBI Taxonomy" id="9606"/>
</organismHost>
<proteinExistence type="inferred from homology"/>